<name>PFDA_METS3</name>
<protein>
    <recommendedName>
        <fullName evidence="1">Prefoldin subunit alpha</fullName>
    </recommendedName>
    <alternativeName>
        <fullName evidence="1">GimC subunit alpha</fullName>
    </alternativeName>
</protein>
<comment type="function">
    <text evidence="1">Molecular chaperone capable of stabilizing a range of proteins. Seems to fulfill an ATP-independent, HSP70-like function in archaeal de novo protein folding.</text>
</comment>
<comment type="subunit">
    <text evidence="1">Heterohexamer of two alpha and four beta subunits.</text>
</comment>
<comment type="subcellular location">
    <subcellularLocation>
        <location evidence="1">Cytoplasm</location>
    </subcellularLocation>
</comment>
<comment type="similarity">
    <text evidence="1">Belongs to the prefoldin alpha subunit family.</text>
</comment>
<sequence>MEGQQKFNQLLNEINVYKQQGDLIQQQIELVRASIAEVDALTNTLDDLEGKDSVEAFVPVGAGSFIKGELKNTDEVIVSIGSGIAVKKDVDGARETIARQKKDLEDSLDKMLANMQQVSDIIGSLSAQAEQLAAVAQGNMSATGLN</sequence>
<feature type="chain" id="PRO_0000322252" description="Prefoldin subunit alpha">
    <location>
        <begin position="1"/>
        <end position="146"/>
    </location>
</feature>
<accession>A5UL29</accession>
<proteinExistence type="inferred from homology"/>
<dbReference type="EMBL" id="CP000678">
    <property type="protein sequence ID" value="ABQ86907.1"/>
    <property type="molecule type" value="Genomic_DNA"/>
</dbReference>
<dbReference type="RefSeq" id="WP_011954057.1">
    <property type="nucleotide sequence ID" value="NZ_CP117965.1"/>
</dbReference>
<dbReference type="SMR" id="A5UL29"/>
<dbReference type="STRING" id="420247.Msm_0702"/>
<dbReference type="EnsemblBacteria" id="ABQ86907">
    <property type="protein sequence ID" value="ABQ86907"/>
    <property type="gene ID" value="Msm_0702"/>
</dbReference>
<dbReference type="GeneID" id="78817331"/>
<dbReference type="KEGG" id="msi:Msm_0702"/>
<dbReference type="PATRIC" id="fig|420247.28.peg.699"/>
<dbReference type="eggNOG" id="arCOG01341">
    <property type="taxonomic scope" value="Archaea"/>
</dbReference>
<dbReference type="HOGENOM" id="CLU_091867_1_1_2"/>
<dbReference type="Proteomes" id="UP000001992">
    <property type="component" value="Chromosome"/>
</dbReference>
<dbReference type="GO" id="GO:0005737">
    <property type="term" value="C:cytoplasm"/>
    <property type="evidence" value="ECO:0007669"/>
    <property type="project" value="UniProtKB-SubCell"/>
</dbReference>
<dbReference type="GO" id="GO:0016272">
    <property type="term" value="C:prefoldin complex"/>
    <property type="evidence" value="ECO:0007669"/>
    <property type="project" value="UniProtKB-UniRule"/>
</dbReference>
<dbReference type="GO" id="GO:0051082">
    <property type="term" value="F:unfolded protein binding"/>
    <property type="evidence" value="ECO:0007669"/>
    <property type="project" value="UniProtKB-UniRule"/>
</dbReference>
<dbReference type="GO" id="GO:0006457">
    <property type="term" value="P:protein folding"/>
    <property type="evidence" value="ECO:0007669"/>
    <property type="project" value="UniProtKB-UniRule"/>
</dbReference>
<dbReference type="CDD" id="cd23160">
    <property type="entry name" value="Prefoldin_alpha_GimC"/>
    <property type="match status" value="1"/>
</dbReference>
<dbReference type="Gene3D" id="1.10.287.370">
    <property type="match status" value="1"/>
</dbReference>
<dbReference type="HAMAP" id="MF_00308">
    <property type="entry name" value="PfdA"/>
    <property type="match status" value="1"/>
</dbReference>
<dbReference type="InterPro" id="IPR011599">
    <property type="entry name" value="PFD_alpha_archaea"/>
</dbReference>
<dbReference type="InterPro" id="IPR009053">
    <property type="entry name" value="Prefoldin"/>
</dbReference>
<dbReference type="InterPro" id="IPR004127">
    <property type="entry name" value="Prefoldin_subunit_alpha"/>
</dbReference>
<dbReference type="NCBIfam" id="TIGR00293">
    <property type="entry name" value="prefoldin subunit alpha"/>
    <property type="match status" value="1"/>
</dbReference>
<dbReference type="PANTHER" id="PTHR12674">
    <property type="entry name" value="PREFOLDIN SUBUNIT 5"/>
    <property type="match status" value="1"/>
</dbReference>
<dbReference type="PANTHER" id="PTHR12674:SF2">
    <property type="entry name" value="PREFOLDIN SUBUNIT 5"/>
    <property type="match status" value="1"/>
</dbReference>
<dbReference type="Pfam" id="PF02996">
    <property type="entry name" value="Prefoldin"/>
    <property type="match status" value="1"/>
</dbReference>
<dbReference type="SUPFAM" id="SSF46579">
    <property type="entry name" value="Prefoldin"/>
    <property type="match status" value="1"/>
</dbReference>
<evidence type="ECO:0000255" key="1">
    <source>
        <dbReference type="HAMAP-Rule" id="MF_00308"/>
    </source>
</evidence>
<reference key="1">
    <citation type="journal article" date="2007" name="Proc. Natl. Acad. Sci. U.S.A.">
        <title>Genomic and metabolic adaptations of Methanobrevibacter smithii to the human gut.</title>
        <authorList>
            <person name="Samuel B.S."/>
            <person name="Hansen E.E."/>
            <person name="Manchester J.K."/>
            <person name="Coutinho P.M."/>
            <person name="Henrissat B."/>
            <person name="Fulton R."/>
            <person name="Latreille P."/>
            <person name="Kim K."/>
            <person name="Wilson R.K."/>
            <person name="Gordon J.I."/>
        </authorList>
    </citation>
    <scope>NUCLEOTIDE SEQUENCE [LARGE SCALE GENOMIC DNA]</scope>
    <source>
        <strain>ATCC 35061 / DSM 861 / OCM 144 / PS</strain>
    </source>
</reference>
<keyword id="KW-0143">Chaperone</keyword>
<keyword id="KW-0963">Cytoplasm</keyword>
<organism>
    <name type="scientific">Methanobrevibacter smithii (strain ATCC 35061 / DSM 861 / OCM 144 / PS)</name>
    <dbReference type="NCBI Taxonomy" id="420247"/>
    <lineage>
        <taxon>Archaea</taxon>
        <taxon>Methanobacteriati</taxon>
        <taxon>Methanobacteriota</taxon>
        <taxon>Methanomada group</taxon>
        <taxon>Methanobacteria</taxon>
        <taxon>Methanobacteriales</taxon>
        <taxon>Methanobacteriaceae</taxon>
        <taxon>Methanobrevibacter</taxon>
    </lineage>
</organism>
<gene>
    <name evidence="1" type="primary">pfdA</name>
    <name type="ordered locus">Msm_0702</name>
</gene>